<feature type="chain" id="PRO_0000335517" description="Translation initiation factor IF-2">
    <location>
        <begin position="1"/>
        <end position="693"/>
    </location>
</feature>
<feature type="domain" description="tr-type G">
    <location>
        <begin position="181"/>
        <end position="349"/>
    </location>
</feature>
<feature type="region of interest" description="G1" evidence="1">
    <location>
        <begin position="190"/>
        <end position="197"/>
    </location>
</feature>
<feature type="region of interest" description="G2" evidence="1">
    <location>
        <begin position="215"/>
        <end position="219"/>
    </location>
</feature>
<feature type="region of interest" description="G3" evidence="1">
    <location>
        <begin position="236"/>
        <end position="239"/>
    </location>
</feature>
<feature type="region of interest" description="G4" evidence="1">
    <location>
        <begin position="290"/>
        <end position="293"/>
    </location>
</feature>
<feature type="region of interest" description="G5" evidence="1">
    <location>
        <begin position="327"/>
        <end position="329"/>
    </location>
</feature>
<feature type="binding site" evidence="2">
    <location>
        <begin position="190"/>
        <end position="197"/>
    </location>
    <ligand>
        <name>GTP</name>
        <dbReference type="ChEBI" id="CHEBI:37565"/>
    </ligand>
</feature>
<feature type="binding site" evidence="2">
    <location>
        <begin position="236"/>
        <end position="240"/>
    </location>
    <ligand>
        <name>GTP</name>
        <dbReference type="ChEBI" id="CHEBI:37565"/>
    </ligand>
</feature>
<feature type="binding site" evidence="2">
    <location>
        <begin position="290"/>
        <end position="293"/>
    </location>
    <ligand>
        <name>GTP</name>
        <dbReference type="ChEBI" id="CHEBI:37565"/>
    </ligand>
</feature>
<keyword id="KW-0963">Cytoplasm</keyword>
<keyword id="KW-0342">GTP-binding</keyword>
<keyword id="KW-0396">Initiation factor</keyword>
<keyword id="KW-0547">Nucleotide-binding</keyword>
<keyword id="KW-0648">Protein biosynthesis</keyword>
<dbReference type="EMBL" id="CP000702">
    <property type="protein sequence ID" value="ABQ46182.1"/>
    <property type="molecule type" value="Genomic_DNA"/>
</dbReference>
<dbReference type="SMR" id="A5IJ09"/>
<dbReference type="STRING" id="390874.Tpet_0153"/>
<dbReference type="KEGG" id="tpt:Tpet_0153"/>
<dbReference type="eggNOG" id="COG0532">
    <property type="taxonomic scope" value="Bacteria"/>
</dbReference>
<dbReference type="HOGENOM" id="CLU_006301_5_1_0"/>
<dbReference type="Proteomes" id="UP000006558">
    <property type="component" value="Chromosome"/>
</dbReference>
<dbReference type="GO" id="GO:0005829">
    <property type="term" value="C:cytosol"/>
    <property type="evidence" value="ECO:0007669"/>
    <property type="project" value="TreeGrafter"/>
</dbReference>
<dbReference type="GO" id="GO:0005525">
    <property type="term" value="F:GTP binding"/>
    <property type="evidence" value="ECO:0007669"/>
    <property type="project" value="UniProtKB-KW"/>
</dbReference>
<dbReference type="GO" id="GO:0003924">
    <property type="term" value="F:GTPase activity"/>
    <property type="evidence" value="ECO:0007669"/>
    <property type="project" value="UniProtKB-UniRule"/>
</dbReference>
<dbReference type="GO" id="GO:0003743">
    <property type="term" value="F:translation initiation factor activity"/>
    <property type="evidence" value="ECO:0007669"/>
    <property type="project" value="UniProtKB-UniRule"/>
</dbReference>
<dbReference type="CDD" id="cd01887">
    <property type="entry name" value="IF2_eIF5B"/>
    <property type="match status" value="1"/>
</dbReference>
<dbReference type="CDD" id="cd03702">
    <property type="entry name" value="IF2_mtIF2_II"/>
    <property type="match status" value="1"/>
</dbReference>
<dbReference type="CDD" id="cd03692">
    <property type="entry name" value="mtIF2_IVc"/>
    <property type="match status" value="1"/>
</dbReference>
<dbReference type="FunFam" id="1.10.10.2480:FF:000002">
    <property type="entry name" value="Translation initiation factor IF-2"/>
    <property type="match status" value="1"/>
</dbReference>
<dbReference type="FunFam" id="2.40.30.10:FF:000008">
    <property type="entry name" value="Translation initiation factor IF-2"/>
    <property type="match status" value="1"/>
</dbReference>
<dbReference type="FunFam" id="2.40.30.10:FF:000054">
    <property type="entry name" value="Translation initiation factor IF-2"/>
    <property type="match status" value="1"/>
</dbReference>
<dbReference type="FunFam" id="3.40.50.10050:FF:000001">
    <property type="entry name" value="Translation initiation factor IF-2"/>
    <property type="match status" value="1"/>
</dbReference>
<dbReference type="FunFam" id="3.40.50.300:FF:000019">
    <property type="entry name" value="Translation initiation factor IF-2"/>
    <property type="match status" value="1"/>
</dbReference>
<dbReference type="Gene3D" id="1.10.10.2480">
    <property type="match status" value="1"/>
</dbReference>
<dbReference type="Gene3D" id="3.40.50.300">
    <property type="entry name" value="P-loop containing nucleotide triphosphate hydrolases"/>
    <property type="match status" value="1"/>
</dbReference>
<dbReference type="Gene3D" id="2.40.30.10">
    <property type="entry name" value="Translation factors"/>
    <property type="match status" value="2"/>
</dbReference>
<dbReference type="Gene3D" id="3.40.50.10050">
    <property type="entry name" value="Translation initiation factor IF- 2, domain 3"/>
    <property type="match status" value="1"/>
</dbReference>
<dbReference type="HAMAP" id="MF_00100_B">
    <property type="entry name" value="IF_2_B"/>
    <property type="match status" value="1"/>
</dbReference>
<dbReference type="InterPro" id="IPR053905">
    <property type="entry name" value="EF-G-like_DII"/>
</dbReference>
<dbReference type="InterPro" id="IPR044145">
    <property type="entry name" value="IF2_II"/>
</dbReference>
<dbReference type="InterPro" id="IPR006847">
    <property type="entry name" value="IF2_N"/>
</dbReference>
<dbReference type="InterPro" id="IPR027417">
    <property type="entry name" value="P-loop_NTPase"/>
</dbReference>
<dbReference type="InterPro" id="IPR005225">
    <property type="entry name" value="Small_GTP-bd"/>
</dbReference>
<dbReference type="InterPro" id="IPR000795">
    <property type="entry name" value="T_Tr_GTP-bd_dom"/>
</dbReference>
<dbReference type="InterPro" id="IPR000178">
    <property type="entry name" value="TF_IF2_bacterial-like"/>
</dbReference>
<dbReference type="InterPro" id="IPR015760">
    <property type="entry name" value="TIF_IF2"/>
</dbReference>
<dbReference type="InterPro" id="IPR023115">
    <property type="entry name" value="TIF_IF2_dom3"/>
</dbReference>
<dbReference type="InterPro" id="IPR036925">
    <property type="entry name" value="TIF_IF2_dom3_sf"/>
</dbReference>
<dbReference type="InterPro" id="IPR009000">
    <property type="entry name" value="Transl_B-barrel_sf"/>
</dbReference>
<dbReference type="NCBIfam" id="TIGR00487">
    <property type="entry name" value="IF-2"/>
    <property type="match status" value="1"/>
</dbReference>
<dbReference type="NCBIfam" id="TIGR00231">
    <property type="entry name" value="small_GTP"/>
    <property type="match status" value="1"/>
</dbReference>
<dbReference type="PANTHER" id="PTHR43381:SF5">
    <property type="entry name" value="TR-TYPE G DOMAIN-CONTAINING PROTEIN"/>
    <property type="match status" value="1"/>
</dbReference>
<dbReference type="PANTHER" id="PTHR43381">
    <property type="entry name" value="TRANSLATION INITIATION FACTOR IF-2-RELATED"/>
    <property type="match status" value="1"/>
</dbReference>
<dbReference type="Pfam" id="PF22042">
    <property type="entry name" value="EF-G_D2"/>
    <property type="match status" value="1"/>
</dbReference>
<dbReference type="Pfam" id="PF00009">
    <property type="entry name" value="GTP_EFTU"/>
    <property type="match status" value="1"/>
</dbReference>
<dbReference type="Pfam" id="PF11987">
    <property type="entry name" value="IF-2"/>
    <property type="match status" value="1"/>
</dbReference>
<dbReference type="Pfam" id="PF04760">
    <property type="entry name" value="IF2_N"/>
    <property type="match status" value="1"/>
</dbReference>
<dbReference type="SUPFAM" id="SSF52156">
    <property type="entry name" value="Initiation factor IF2/eIF5b, domain 3"/>
    <property type="match status" value="1"/>
</dbReference>
<dbReference type="SUPFAM" id="SSF52540">
    <property type="entry name" value="P-loop containing nucleoside triphosphate hydrolases"/>
    <property type="match status" value="1"/>
</dbReference>
<dbReference type="SUPFAM" id="SSF50447">
    <property type="entry name" value="Translation proteins"/>
    <property type="match status" value="2"/>
</dbReference>
<dbReference type="PROSITE" id="PS51722">
    <property type="entry name" value="G_TR_2"/>
    <property type="match status" value="1"/>
</dbReference>
<accession>A5IJ09</accession>
<evidence type="ECO:0000250" key="1"/>
<evidence type="ECO:0000255" key="2">
    <source>
        <dbReference type="HAMAP-Rule" id="MF_00100"/>
    </source>
</evidence>
<protein>
    <recommendedName>
        <fullName evidence="2">Translation initiation factor IF-2</fullName>
    </recommendedName>
</protein>
<name>IF2_THEP1</name>
<sequence length="693" mass="78265">MIEMARLRVYELARKLNMSPKELLQELEELGVNVKSHMSYVDEEMANIIIDLLEEDNRKAKQPSKPKKEKGEEEVEKEVVEKKKKKKITLKPDELKLDIIAEKIGVPQNKIIQDMFVKRGIALRPGQILKLEEVEQILKEYKIEIEIEEEQQTSVEEVDEFELLEKRYQELYEKEKDKLVPRPPVVTVMGHVDHGKTTLLDRIRSTRVAEREEGGITQSIGAYQVEVNGKKITFIDTPGHELFTEMRARGAQATDIVVLVVAADDGVMPQTIEAYNHAKAANVPIIVAINKIDKPNANVEKTKQELVEKLGLIPEEWGGDTIVVPISARTGQGVDELLEMILLVAEMNEIKCYPEGPARAVIIESKLDKKMGPVASVIVKDGVLKVGDAVVASNTYGRVRNLFDDNMRPIREAYPSQPVMILGFEDVPDVHSNVYVVESAEKAKEIVEKRLQRLEAQKQSRKHINLEELMKMMQEKEKKVLNLILKADTYGSVAALKNAINKLQSKEIELNIVHAGVGEISTSDVMLAAAVDGVILGFRVKVNNQARRLAEQEGVDVRTYSIIYKLVEDLKLALEGMLEPEEVEEVIGHGEIRKVFKISKVGKVAGVQMLDGKADRNGFVRIYRNGQLVFEGKIESLKHYKEDVNVVEAPQECGIKFAGFDDIQEGDELEFYVIRKVKRKPTFVEEQADQEQK</sequence>
<reference key="1">
    <citation type="submission" date="2007-05" db="EMBL/GenBank/DDBJ databases">
        <title>Complete sequence of Thermotoga petrophila RKU-1.</title>
        <authorList>
            <consortium name="US DOE Joint Genome Institute"/>
            <person name="Copeland A."/>
            <person name="Lucas S."/>
            <person name="Lapidus A."/>
            <person name="Barry K."/>
            <person name="Glavina del Rio T."/>
            <person name="Dalin E."/>
            <person name="Tice H."/>
            <person name="Pitluck S."/>
            <person name="Sims D."/>
            <person name="Brettin T."/>
            <person name="Bruce D."/>
            <person name="Detter J.C."/>
            <person name="Han C."/>
            <person name="Tapia R."/>
            <person name="Schmutz J."/>
            <person name="Larimer F."/>
            <person name="Land M."/>
            <person name="Hauser L."/>
            <person name="Kyrpides N."/>
            <person name="Mikhailova N."/>
            <person name="Nelson K."/>
            <person name="Gogarten J.P."/>
            <person name="Noll K."/>
            <person name="Richardson P."/>
        </authorList>
    </citation>
    <scope>NUCLEOTIDE SEQUENCE [LARGE SCALE GENOMIC DNA]</scope>
    <source>
        <strain>ATCC BAA-488 / DSM 13995 / JCM 10881 / RKU-1</strain>
    </source>
</reference>
<comment type="function">
    <text evidence="2">One of the essential components for the initiation of protein synthesis. Protects formylmethionyl-tRNA from spontaneous hydrolysis and promotes its binding to the 30S ribosomal subunits. Also involved in the hydrolysis of GTP during the formation of the 70S ribosomal complex.</text>
</comment>
<comment type="subcellular location">
    <subcellularLocation>
        <location evidence="2">Cytoplasm</location>
    </subcellularLocation>
</comment>
<comment type="similarity">
    <text evidence="2">Belongs to the TRAFAC class translation factor GTPase superfamily. Classic translation factor GTPase family. IF-2 subfamily.</text>
</comment>
<organism>
    <name type="scientific">Thermotoga petrophila (strain ATCC BAA-488 / DSM 13995 / JCM 10881 / RKU-1)</name>
    <dbReference type="NCBI Taxonomy" id="390874"/>
    <lineage>
        <taxon>Bacteria</taxon>
        <taxon>Thermotogati</taxon>
        <taxon>Thermotogota</taxon>
        <taxon>Thermotogae</taxon>
        <taxon>Thermotogales</taxon>
        <taxon>Thermotogaceae</taxon>
        <taxon>Thermotoga</taxon>
    </lineage>
</organism>
<gene>
    <name evidence="2" type="primary">infB</name>
    <name type="ordered locus">Tpet_0153</name>
</gene>
<proteinExistence type="inferred from homology"/>